<organismHost>
    <name type="scientific">Haemophilus influenzae</name>
    <dbReference type="NCBI Taxonomy" id="727"/>
</organismHost>
<proteinExistence type="evidence at protein level"/>
<evidence type="ECO:0000269" key="1">
    <source>
    </source>
</evidence>
<evidence type="ECO:0000303" key="2">
    <source>
    </source>
</evidence>
<evidence type="ECO:0000305" key="3"/>
<organism>
    <name type="scientific">Haemophilus phage HP1 (strain HP1c1)</name>
    <name type="common">Bacteriophage HP1</name>
    <dbReference type="NCBI Taxonomy" id="1289570"/>
    <lineage>
        <taxon>Viruses</taxon>
        <taxon>Duplodnaviria</taxon>
        <taxon>Heunggongvirae</taxon>
        <taxon>Uroviricota</taxon>
        <taxon>Caudoviricetes</taxon>
        <taxon>Peduoviridae</taxon>
        <taxon>Hpunavirus</taxon>
        <taxon>Haemophilus phage HP1</taxon>
    </lineage>
</organism>
<dbReference type="EC" id="2.1.1.72" evidence="1"/>
<dbReference type="EMBL" id="U24159">
    <property type="protein sequence ID" value="AAB09198.1"/>
    <property type="molecule type" value="Genomic_DNA"/>
</dbReference>
<dbReference type="PIR" id="S69519">
    <property type="entry name" value="S69519"/>
</dbReference>
<dbReference type="RefSeq" id="NP_043482.1">
    <property type="nucleotide sequence ID" value="NC_001697.1"/>
</dbReference>
<dbReference type="REBASE" id="4238">
    <property type="entry name" value="M.HinHP1Dam"/>
</dbReference>
<dbReference type="GeneID" id="1261115"/>
<dbReference type="KEGG" id="vg:1261115"/>
<dbReference type="Proteomes" id="UP000001713">
    <property type="component" value="Segment"/>
</dbReference>
<dbReference type="GO" id="GO:0003677">
    <property type="term" value="F:DNA binding"/>
    <property type="evidence" value="ECO:0007669"/>
    <property type="project" value="InterPro"/>
</dbReference>
<dbReference type="GO" id="GO:0009007">
    <property type="term" value="F:site-specific DNA-methyltransferase (adenine-specific) activity"/>
    <property type="evidence" value="ECO:0000314"/>
    <property type="project" value="UniProtKB"/>
</dbReference>
<dbReference type="GO" id="GO:0009307">
    <property type="term" value="P:DNA restriction-modification system"/>
    <property type="evidence" value="ECO:0007669"/>
    <property type="project" value="InterPro"/>
</dbReference>
<dbReference type="GO" id="GO:0032259">
    <property type="term" value="P:methylation"/>
    <property type="evidence" value="ECO:0007669"/>
    <property type="project" value="UniProtKB-KW"/>
</dbReference>
<dbReference type="GO" id="GO:0099018">
    <property type="term" value="P:symbiont-mediated evasion of host restriction-modification system"/>
    <property type="evidence" value="ECO:0007669"/>
    <property type="project" value="UniProtKB-KW"/>
</dbReference>
<dbReference type="GO" id="GO:0052170">
    <property type="term" value="P:symbiont-mediated suppression of host innate immune response"/>
    <property type="evidence" value="ECO:0007669"/>
    <property type="project" value="UniProtKB-KW"/>
</dbReference>
<dbReference type="InterPro" id="IPR008593">
    <property type="entry name" value="Dam_MeTrfase"/>
</dbReference>
<dbReference type="NCBIfam" id="TIGR01712">
    <property type="entry name" value="phage_N6A_met"/>
    <property type="match status" value="1"/>
</dbReference>
<dbReference type="Pfam" id="PF05869">
    <property type="entry name" value="Dam"/>
    <property type="match status" value="1"/>
</dbReference>
<dbReference type="PROSITE" id="PS00092">
    <property type="entry name" value="N6_MTASE"/>
    <property type="match status" value="1"/>
</dbReference>
<reference key="1">
    <citation type="journal article" date="1996" name="Nucleic Acids Res.">
        <title>The complete nucleotide sequence of bacteriophage HP1 DNA.</title>
        <authorList>
            <person name="Esposito D."/>
            <person name="Fitzmaurice W.P."/>
            <person name="Benjamin R.C."/>
            <person name="Goodman S.D."/>
            <person name="Waldman A.S."/>
            <person name="Scocca J.J."/>
        </authorList>
    </citation>
    <scope>NUCLEOTIDE SEQUENCE [LARGE SCALE GENOMIC DNA]</scope>
</reference>
<reference key="2">
    <citation type="journal article" date="1999" name="Acta Microbiol. Pol.">
        <title>Cloning of the Dam methyltransferase gene from Haemophilus influenzae bacteriophage HP1.</title>
        <authorList>
            <person name="Piekarowicz A."/>
            <person name="Bujnicki J."/>
        </authorList>
    </citation>
    <scope>FUNCTION</scope>
    <scope>CATALYTIC ACTIVITY</scope>
</reference>
<reference key="3">
    <citation type="journal article" date="2003" name="Nucleic Acids Res.">
        <title>A nomenclature for restriction enzymes, DNA methyltransferases, homing endonucleases and their genes.</title>
        <authorList>
            <person name="Roberts R.J."/>
            <person name="Belfort M."/>
            <person name="Bestor T."/>
            <person name="Bhagwat A.S."/>
            <person name="Bickle T.A."/>
            <person name="Bitinaite J."/>
            <person name="Blumenthal R.M."/>
            <person name="Degtyarev S.K."/>
            <person name="Dryden D.T."/>
            <person name="Dybvig K."/>
            <person name="Firman K."/>
            <person name="Gromova E.S."/>
            <person name="Gumport R.I."/>
            <person name="Halford S.E."/>
            <person name="Hattman S."/>
            <person name="Heitman J."/>
            <person name="Hornby D.P."/>
            <person name="Janulaitis A."/>
            <person name="Jeltsch A."/>
            <person name="Josephsen J."/>
            <person name="Kiss A."/>
            <person name="Klaenhammer T.R."/>
            <person name="Kobayashi I."/>
            <person name="Kong H."/>
            <person name="Krueger D.H."/>
            <person name="Lacks S."/>
            <person name="Marinus M.G."/>
            <person name="Miyahara M."/>
            <person name="Morgan R.D."/>
            <person name="Murray N.E."/>
            <person name="Nagaraja V."/>
            <person name="Piekarowicz A."/>
            <person name="Pingoud A."/>
            <person name="Raleigh E."/>
            <person name="Rao D.N."/>
            <person name="Reich N."/>
            <person name="Repin V.E."/>
            <person name="Selker E.U."/>
            <person name="Shaw P.C."/>
            <person name="Stein D.C."/>
            <person name="Stoddard B.L."/>
            <person name="Szybalski W."/>
            <person name="Trautner T.A."/>
            <person name="Van Etten J.L."/>
            <person name="Vitor J.M."/>
            <person name="Wilson G.G."/>
            <person name="Xu S.Y."/>
        </authorList>
    </citation>
    <scope>NOMENCLATURE</scope>
</reference>
<keyword id="KW-0945">Host-virus interaction</keyword>
<keyword id="KW-1090">Inhibition of host innate immune response by virus</keyword>
<keyword id="KW-0489">Methyltransferase</keyword>
<keyword id="KW-1185">Reference proteome</keyword>
<keyword id="KW-1258">Restriction-modification system evasion by virus</keyword>
<keyword id="KW-0949">S-adenosyl-L-methionine</keyword>
<keyword id="KW-0808">Transferase</keyword>
<keyword id="KW-0899">Viral immunoevasion</keyword>
<accession>P51715</accession>
<comment type="function">
    <text evidence="1 3">Methyltransferase that methylates adenine residues in the ssDNA and dsDNA sequence 5'-GATC-3' (PubMed:10581668). May prevent degradation of viral DNA by the host restriction-modification antiviral defense system (Probable).</text>
</comment>
<comment type="catalytic activity">
    <reaction evidence="1">
        <text>a 2'-deoxyadenosine in DNA + S-adenosyl-L-methionine = an N(6)-methyl-2'-deoxyadenosine in DNA + S-adenosyl-L-homocysteine + H(+)</text>
        <dbReference type="Rhea" id="RHEA:15197"/>
        <dbReference type="Rhea" id="RHEA-COMP:12418"/>
        <dbReference type="Rhea" id="RHEA-COMP:12419"/>
        <dbReference type="ChEBI" id="CHEBI:15378"/>
        <dbReference type="ChEBI" id="CHEBI:57856"/>
        <dbReference type="ChEBI" id="CHEBI:59789"/>
        <dbReference type="ChEBI" id="CHEBI:90615"/>
        <dbReference type="ChEBI" id="CHEBI:90616"/>
        <dbReference type="EC" id="2.1.1.72"/>
    </reaction>
</comment>
<comment type="similarity">
    <text evidence="3">Belongs to the N(4)/N(6)-methyltransferase family.</text>
</comment>
<feature type="chain" id="PRO_0000088019" description="DNA N-6-adenine-methyltransferase">
    <location>
        <begin position="1"/>
        <end position="173"/>
    </location>
</feature>
<sequence length="173" mass="20241">MMTKSNTKKSDKDLWATPWWVFHYAEQYFNIKFDLDTCAMEHNTKVKNFITPEQNTLTADWQGRYCWMNPPYSNPLPFVLRAISQSVLHNKTVVMLLNVDGSTKWFDMCVRNAKEIVYITNSRIPFINNETGEETDQNNKPQMLVLFEPKAPYGSLKSSYVSLHEMKEKGMLQ</sequence>
<protein>
    <recommendedName>
        <fullName evidence="3">DNA N-6-adenine-methyltransferase</fullName>
        <shortName evidence="3">DAM</shortName>
        <ecNumber evidence="1">2.1.1.72</ecNumber>
    </recommendedName>
    <alternativeName>
        <fullName>ORF13</fullName>
    </alternativeName>
    <alternativeName>
        <fullName evidence="2">Orphan methyltransferase M.HinHP1Dam</fullName>
        <shortName evidence="2">M.HinHP1Dam</shortName>
    </alternativeName>
</protein>
<name>DAM_BPHC1</name>